<dbReference type="EMBL" id="BX248357">
    <property type="protein sequence ID" value="CAE49813.1"/>
    <property type="molecule type" value="Genomic_DNA"/>
</dbReference>
<dbReference type="RefSeq" id="WP_010934952.1">
    <property type="nucleotide sequence ID" value="NC_002935.2"/>
</dbReference>
<dbReference type="SMR" id="Q6NH60"/>
<dbReference type="STRING" id="257309.DIP1286"/>
<dbReference type="KEGG" id="cdi:DIP1286"/>
<dbReference type="HOGENOM" id="CLU_155669_0_1_11"/>
<dbReference type="Proteomes" id="UP000002198">
    <property type="component" value="Chromosome"/>
</dbReference>
<dbReference type="CDD" id="cd04872">
    <property type="entry name" value="ACT_1ZPV"/>
    <property type="match status" value="1"/>
</dbReference>
<dbReference type="Gene3D" id="3.30.70.260">
    <property type="match status" value="1"/>
</dbReference>
<dbReference type="HAMAP" id="MF_01054">
    <property type="entry name" value="UPF0237"/>
    <property type="match status" value="1"/>
</dbReference>
<dbReference type="InterPro" id="IPR045865">
    <property type="entry name" value="ACT-like_dom_sf"/>
</dbReference>
<dbReference type="InterPro" id="IPR002912">
    <property type="entry name" value="ACT_dom"/>
</dbReference>
<dbReference type="InterPro" id="IPR050990">
    <property type="entry name" value="UPF0237/GcvR_regulator"/>
</dbReference>
<dbReference type="InterPro" id="IPR022986">
    <property type="entry name" value="UPF0237_ACT"/>
</dbReference>
<dbReference type="NCBIfam" id="NF001220">
    <property type="entry name" value="PRK00194.1"/>
    <property type="match status" value="1"/>
</dbReference>
<dbReference type="PANTHER" id="PTHR34875">
    <property type="entry name" value="UPF0237 PROTEIN MJ1558"/>
    <property type="match status" value="1"/>
</dbReference>
<dbReference type="PANTHER" id="PTHR34875:SF6">
    <property type="entry name" value="UPF0237 PROTEIN MJ1558"/>
    <property type="match status" value="1"/>
</dbReference>
<dbReference type="Pfam" id="PF13740">
    <property type="entry name" value="ACT_6"/>
    <property type="match status" value="1"/>
</dbReference>
<dbReference type="SUPFAM" id="SSF55021">
    <property type="entry name" value="ACT-like"/>
    <property type="match status" value="1"/>
</dbReference>
<dbReference type="PROSITE" id="PS51671">
    <property type="entry name" value="ACT"/>
    <property type="match status" value="1"/>
</dbReference>
<evidence type="ECO:0000255" key="1">
    <source>
        <dbReference type="HAMAP-Rule" id="MF_01054"/>
    </source>
</evidence>
<proteinExistence type="inferred from homology"/>
<gene>
    <name type="ordered locus">DIP1286</name>
</gene>
<name>Y1286_CORDI</name>
<feature type="chain" id="PRO_0000219896" description="UPF0237 protein DIP1286">
    <location>
        <begin position="1"/>
        <end position="89"/>
    </location>
</feature>
<feature type="domain" description="ACT" evidence="1">
    <location>
        <begin position="4"/>
        <end position="78"/>
    </location>
</feature>
<reference key="1">
    <citation type="journal article" date="2003" name="Nucleic Acids Res.">
        <title>The complete genome sequence and analysis of Corynebacterium diphtheriae NCTC13129.</title>
        <authorList>
            <person name="Cerdeno-Tarraga A.-M."/>
            <person name="Efstratiou A."/>
            <person name="Dover L.G."/>
            <person name="Holden M.T.G."/>
            <person name="Pallen M.J."/>
            <person name="Bentley S.D."/>
            <person name="Besra G.S."/>
            <person name="Churcher C.M."/>
            <person name="James K.D."/>
            <person name="De Zoysa A."/>
            <person name="Chillingworth T."/>
            <person name="Cronin A."/>
            <person name="Dowd L."/>
            <person name="Feltwell T."/>
            <person name="Hamlin N."/>
            <person name="Holroyd S."/>
            <person name="Jagels K."/>
            <person name="Moule S."/>
            <person name="Quail M.A."/>
            <person name="Rabbinowitsch E."/>
            <person name="Rutherford K.M."/>
            <person name="Thomson N.R."/>
            <person name="Unwin L."/>
            <person name="Whitehead S."/>
            <person name="Barrell B.G."/>
            <person name="Parkhill J."/>
        </authorList>
    </citation>
    <scope>NUCLEOTIDE SEQUENCE [LARGE SCALE GENOMIC DNA]</scope>
    <source>
        <strain>ATCC 700971 / NCTC 13129 / Biotype gravis</strain>
    </source>
</reference>
<comment type="similarity">
    <text evidence="1">Belongs to the UPF0237 family.</text>
</comment>
<keyword id="KW-1185">Reference proteome</keyword>
<accession>Q6NH60</accession>
<protein>
    <recommendedName>
        <fullName evidence="1">UPF0237 protein DIP1286</fullName>
    </recommendedName>
</protein>
<organism>
    <name type="scientific">Corynebacterium diphtheriae (strain ATCC 700971 / NCTC 13129 / Biotype gravis)</name>
    <dbReference type="NCBI Taxonomy" id="257309"/>
    <lineage>
        <taxon>Bacteria</taxon>
        <taxon>Bacillati</taxon>
        <taxon>Actinomycetota</taxon>
        <taxon>Actinomycetes</taxon>
        <taxon>Mycobacteriales</taxon>
        <taxon>Corynebacteriaceae</taxon>
        <taxon>Corynebacterium</taxon>
    </lineage>
</organism>
<sequence length="89" mass="9579">MFAIISVTGADHTGIIAAVATKCADLGVNINNVSQTIMDGYFTMILHVSFDDSATDIATIQESMADVEKDQNLVIRIQSQAIFDAMNII</sequence>